<evidence type="ECO:0000255" key="1">
    <source>
        <dbReference type="HAMAP-Rule" id="MF_00756"/>
    </source>
</evidence>
<gene>
    <name evidence="1" type="primary">rnp3</name>
    <name type="ordered locus">Mbar_A2501</name>
</gene>
<comment type="function">
    <text evidence="1">Part of ribonuclease P, a protein complex that generates mature tRNA molecules by cleaving their 5'-ends.</text>
</comment>
<comment type="catalytic activity">
    <reaction evidence="1">
        <text>Endonucleolytic cleavage of RNA, removing 5'-extranucleotides from tRNA precursor.</text>
        <dbReference type="EC" id="3.1.26.5"/>
    </reaction>
</comment>
<comment type="subunit">
    <text evidence="1">Consists of a catalytic RNA component and at least 4-5 protein subunits.</text>
</comment>
<comment type="subcellular location">
    <subcellularLocation>
        <location evidence="1">Cytoplasm</location>
    </subcellularLocation>
</comment>
<comment type="similarity">
    <text evidence="1">Belongs to the eukaryotic/archaeal RNase P protein component 3 family.</text>
</comment>
<dbReference type="EC" id="3.1.26.5" evidence="1"/>
<dbReference type="EMBL" id="CP000099">
    <property type="protein sequence ID" value="AAZ71414.1"/>
    <property type="molecule type" value="Genomic_DNA"/>
</dbReference>
<dbReference type="SMR" id="Q469M8"/>
<dbReference type="STRING" id="269797.Mbar_A2501"/>
<dbReference type="PaxDb" id="269797-Mbar_A2501"/>
<dbReference type="KEGG" id="mba:Mbar_A2501"/>
<dbReference type="eggNOG" id="arCOG00307">
    <property type="taxonomic scope" value="Archaea"/>
</dbReference>
<dbReference type="HOGENOM" id="CLU_074509_1_0_2"/>
<dbReference type="OrthoDB" id="85765at2157"/>
<dbReference type="GO" id="GO:0005737">
    <property type="term" value="C:cytoplasm"/>
    <property type="evidence" value="ECO:0007669"/>
    <property type="project" value="UniProtKB-SubCell"/>
</dbReference>
<dbReference type="GO" id="GO:0030677">
    <property type="term" value="C:ribonuclease P complex"/>
    <property type="evidence" value="ECO:0007669"/>
    <property type="project" value="UniProtKB-UniRule"/>
</dbReference>
<dbReference type="GO" id="GO:0004526">
    <property type="term" value="F:ribonuclease P activity"/>
    <property type="evidence" value="ECO:0007669"/>
    <property type="project" value="UniProtKB-UniRule"/>
</dbReference>
<dbReference type="GO" id="GO:0003723">
    <property type="term" value="F:RNA binding"/>
    <property type="evidence" value="ECO:0007669"/>
    <property type="project" value="TreeGrafter"/>
</dbReference>
<dbReference type="GO" id="GO:0001682">
    <property type="term" value="P:tRNA 5'-leader removal"/>
    <property type="evidence" value="ECO:0007669"/>
    <property type="project" value="UniProtKB-UniRule"/>
</dbReference>
<dbReference type="Gene3D" id="3.20.20.140">
    <property type="entry name" value="Metal-dependent hydrolases"/>
    <property type="match status" value="1"/>
</dbReference>
<dbReference type="HAMAP" id="MF_00756">
    <property type="entry name" value="RNase_P_3"/>
    <property type="match status" value="1"/>
</dbReference>
<dbReference type="InterPro" id="IPR016195">
    <property type="entry name" value="Pol/histidinol_Pase-like"/>
</dbReference>
<dbReference type="InterPro" id="IPR023539">
    <property type="entry name" value="RNase_P_comp-3_arc"/>
</dbReference>
<dbReference type="InterPro" id="IPR002738">
    <property type="entry name" value="RNase_P_p30"/>
</dbReference>
<dbReference type="NCBIfam" id="NF046111">
    <property type="entry name" value="RNaseP3Mthb"/>
    <property type="match status" value="1"/>
</dbReference>
<dbReference type="PANTHER" id="PTHR13031:SF0">
    <property type="entry name" value="RIBONUCLEASE P PROTEIN SUBUNIT P30"/>
    <property type="match status" value="1"/>
</dbReference>
<dbReference type="PANTHER" id="PTHR13031">
    <property type="entry name" value="RIBONUCLEASE P SUBUNIT P30"/>
    <property type="match status" value="1"/>
</dbReference>
<dbReference type="Pfam" id="PF01876">
    <property type="entry name" value="RNase_P_p30"/>
    <property type="match status" value="1"/>
</dbReference>
<dbReference type="SUPFAM" id="SSF89550">
    <property type="entry name" value="PHP domain-like"/>
    <property type="match status" value="1"/>
</dbReference>
<organism>
    <name type="scientific">Methanosarcina barkeri (strain Fusaro / DSM 804)</name>
    <dbReference type="NCBI Taxonomy" id="269797"/>
    <lineage>
        <taxon>Archaea</taxon>
        <taxon>Methanobacteriati</taxon>
        <taxon>Methanobacteriota</taxon>
        <taxon>Stenosarchaea group</taxon>
        <taxon>Methanomicrobia</taxon>
        <taxon>Methanosarcinales</taxon>
        <taxon>Methanosarcinaceae</taxon>
        <taxon>Methanosarcina</taxon>
    </lineage>
</organism>
<protein>
    <recommendedName>
        <fullName evidence="1">Ribonuclease P protein component 3</fullName>
        <shortName evidence="1">RNase P component 3</shortName>
        <ecNumber evidence="1">3.1.26.5</ecNumber>
    </recommendedName>
    <alternativeName>
        <fullName evidence="1">Rpp30</fullName>
    </alternativeName>
</protein>
<name>RNP3_METBF</name>
<feature type="chain" id="PRO_1000046625" description="Ribonuclease P protein component 3">
    <location>
        <begin position="1"/>
        <end position="239"/>
    </location>
</feature>
<keyword id="KW-0963">Cytoplasm</keyword>
<keyword id="KW-0255">Endonuclease</keyword>
<keyword id="KW-0378">Hydrolase</keyword>
<keyword id="KW-0540">Nuclease</keyword>
<keyword id="KW-0819">tRNA processing</keyword>
<accession>Q469M8</accession>
<sequence length="239" mass="26090">MGKPKFYDFCVHAVPDGENTVDQLSALARHLGYSGIALTNHSDKLPQSQPVLPSTNEFEVFKGIELVEENPSKLHGLIGKFRKSVDVLIVHGGSENVNRAALENPRVDILNHPAFAKSSGLNQVLAKSAAENDVAISLIIRPLLHSRGPRRVRLLSNLRANLDLARKYDVSLVLSSGAMSCFDLRSPMETLALAEVCGLEEDEALEAITVVPERIISRNRPGPGHVREGIEVLEEGDYS</sequence>
<reference key="1">
    <citation type="journal article" date="2006" name="J. Bacteriol.">
        <title>The Methanosarcina barkeri genome: comparative analysis with Methanosarcina acetivorans and Methanosarcina mazei reveals extensive rearrangement within methanosarcinal genomes.</title>
        <authorList>
            <person name="Maeder D.L."/>
            <person name="Anderson I."/>
            <person name="Brettin T.S."/>
            <person name="Bruce D.C."/>
            <person name="Gilna P."/>
            <person name="Han C.S."/>
            <person name="Lapidus A."/>
            <person name="Metcalf W.W."/>
            <person name="Saunders E."/>
            <person name="Tapia R."/>
            <person name="Sowers K.R."/>
        </authorList>
    </citation>
    <scope>NUCLEOTIDE SEQUENCE [LARGE SCALE GENOMIC DNA]</scope>
    <source>
        <strain>Fusaro / DSM 804</strain>
    </source>
</reference>
<proteinExistence type="inferred from homology"/>